<organism>
    <name type="scientific">Macaca fascicularis</name>
    <name type="common">Crab-eating macaque</name>
    <name type="synonym">Cynomolgus monkey</name>
    <dbReference type="NCBI Taxonomy" id="9541"/>
    <lineage>
        <taxon>Eukaryota</taxon>
        <taxon>Metazoa</taxon>
        <taxon>Chordata</taxon>
        <taxon>Craniata</taxon>
        <taxon>Vertebrata</taxon>
        <taxon>Euteleostomi</taxon>
        <taxon>Mammalia</taxon>
        <taxon>Eutheria</taxon>
        <taxon>Euarchontoglires</taxon>
        <taxon>Primates</taxon>
        <taxon>Haplorrhini</taxon>
        <taxon>Catarrhini</taxon>
        <taxon>Cercopithecidae</taxon>
        <taxon>Cercopithecinae</taxon>
        <taxon>Macaca</taxon>
    </lineage>
</organism>
<evidence type="ECO:0000250" key="1"/>
<evidence type="ECO:0000255" key="2"/>
<evidence type="ECO:0000255" key="3">
    <source>
        <dbReference type="PROSITE-ProRule" id="PRU00521"/>
    </source>
</evidence>
<evidence type="ECO:0000305" key="4"/>
<sequence length="245" mass="28371">QLRAFVCRLSSVIFYETMYVGIVLLGLIAFDRFLKIIRPLRNIFLKKTVFAKTVSVFIWSFFFFISLPNMILSNKEATPSSVKKCASLKGPLGLKWHQIVNNISQFIFWTVFVLMLVFYVVIAKKVYDSYRKSKSKDRKNNKKLEGKVFVVVAVFFVCFAPFHFTRVPYTYSQTNNKTDCRLQNQLFIAKETTLFLAATNICMDPLIYIFLCKKFTEKLPCMRGRKTIASSQENQSSQTDNITLG</sequence>
<gene>
    <name type="primary">P2RY13</name>
    <name type="synonym">GPR86</name>
    <name type="ORF">QflA-15316</name>
</gene>
<name>P2Y13_MACFA</name>
<proteinExistence type="evidence at transcript level"/>
<comment type="function">
    <text evidence="1">Receptor for ADP. Coupled to G(i)-proteins. May play a role in hematopoiesis and the immune system (By similarity).</text>
</comment>
<comment type="subcellular location">
    <subcellularLocation>
        <location>Cell membrane</location>
        <topology>Multi-pass membrane protein</topology>
    </subcellularLocation>
</comment>
<comment type="similarity">
    <text evidence="3">Belongs to the G-protein coupled receptor 1 family.</text>
</comment>
<comment type="sequence caution" evidence="4">
    <conflict type="erroneous initiation">
        <sequence resource="EMBL-CDS" id="BAB39342"/>
    </conflict>
</comment>
<keyword id="KW-1003">Cell membrane</keyword>
<keyword id="KW-1015">Disulfide bond</keyword>
<keyword id="KW-0297">G-protein coupled receptor</keyword>
<keyword id="KW-0472">Membrane</keyword>
<keyword id="KW-0675">Receptor</keyword>
<keyword id="KW-1185">Reference proteome</keyword>
<keyword id="KW-0807">Transducer</keyword>
<keyword id="KW-0812">Transmembrane</keyword>
<keyword id="KW-1133">Transmembrane helix</keyword>
<feature type="chain" id="PRO_0000070041" description="P2Y purinoceptor 13">
    <location>
        <begin position="1" status="less than"/>
        <end position="245"/>
    </location>
</feature>
<feature type="topological domain" description="Extracellular" evidence="2">
    <location>
        <begin position="1" status="less than"/>
        <end position="9"/>
    </location>
</feature>
<feature type="transmembrane region" description="Helical; Name=3" evidence="2">
    <location>
        <begin position="10"/>
        <end position="30"/>
    </location>
</feature>
<feature type="topological domain" description="Cytoplasmic" evidence="2">
    <location>
        <begin position="31"/>
        <end position="35"/>
    </location>
</feature>
<feature type="transmembrane region" description="Helical; Name=4" evidence="2">
    <location>
        <begin position="36"/>
        <end position="56"/>
    </location>
</feature>
<feature type="topological domain" description="Extracellular" evidence="2">
    <location>
        <begin position="57"/>
        <end position="85"/>
    </location>
</feature>
<feature type="transmembrane region" description="Helical; Name=5" evidence="2">
    <location>
        <begin position="86"/>
        <end position="106"/>
    </location>
</feature>
<feature type="topological domain" description="Cytoplasmic" evidence="2">
    <location>
        <begin position="107"/>
        <end position="126"/>
    </location>
</feature>
<feature type="transmembrane region" description="Helical; Name=6" evidence="2">
    <location>
        <begin position="127"/>
        <end position="147"/>
    </location>
</feature>
<feature type="topological domain" description="Extracellular" evidence="2">
    <location>
        <begin position="148"/>
        <end position="174"/>
    </location>
</feature>
<feature type="transmembrane region" description="Helical; Name=7" evidence="2">
    <location>
        <begin position="175"/>
        <end position="195"/>
    </location>
</feature>
<feature type="topological domain" description="Cytoplasmic" evidence="2">
    <location>
        <begin position="196"/>
        <end position="245"/>
    </location>
</feature>
<feature type="disulfide bond" evidence="3">
    <location>
        <begin position="7"/>
        <end position="85"/>
    </location>
</feature>
<feature type="non-terminal residue">
    <location>
        <position position="1"/>
    </location>
</feature>
<dbReference type="EMBL" id="AB056816">
    <property type="protein sequence ID" value="BAB39342.1"/>
    <property type="status" value="ALT_INIT"/>
    <property type="molecule type" value="mRNA"/>
</dbReference>
<dbReference type="SMR" id="Q9BE53"/>
<dbReference type="STRING" id="9541.ENSMFAP00000023660"/>
<dbReference type="eggNOG" id="ENOG502QUS2">
    <property type="taxonomic scope" value="Eukaryota"/>
</dbReference>
<dbReference type="Proteomes" id="UP000233100">
    <property type="component" value="Unplaced"/>
</dbReference>
<dbReference type="GO" id="GO:0005886">
    <property type="term" value="C:plasma membrane"/>
    <property type="evidence" value="ECO:0007669"/>
    <property type="project" value="UniProtKB-SubCell"/>
</dbReference>
<dbReference type="GO" id="GO:0045028">
    <property type="term" value="F:G protein-coupled purinergic nucleotide receptor activity"/>
    <property type="evidence" value="ECO:0007669"/>
    <property type="project" value="InterPro"/>
</dbReference>
<dbReference type="Gene3D" id="1.20.1070.10">
    <property type="entry name" value="Rhodopsin 7-helix transmembrane proteins"/>
    <property type="match status" value="1"/>
</dbReference>
<dbReference type="InterPro" id="IPR000276">
    <property type="entry name" value="GPCR_Rhodpsn"/>
</dbReference>
<dbReference type="InterPro" id="IPR017452">
    <property type="entry name" value="GPCR_Rhodpsn_7TM"/>
</dbReference>
<dbReference type="InterPro" id="IPR008109">
    <property type="entry name" value="P2Y13_rcpt"/>
</dbReference>
<dbReference type="PANTHER" id="PTHR24233:SF10">
    <property type="entry name" value="P2Y PURINOCEPTOR 13"/>
    <property type="match status" value="1"/>
</dbReference>
<dbReference type="PANTHER" id="PTHR24233">
    <property type="entry name" value="P2Y PURINOCEPTOR-RELATED G-PROTEIN COUPLED RECEPTOR"/>
    <property type="match status" value="1"/>
</dbReference>
<dbReference type="Pfam" id="PF00001">
    <property type="entry name" value="7tm_1"/>
    <property type="match status" value="1"/>
</dbReference>
<dbReference type="PRINTS" id="PR00237">
    <property type="entry name" value="GPCRRHODOPSN"/>
</dbReference>
<dbReference type="PRINTS" id="PR01735">
    <property type="entry name" value="P2Y13PRNCPTR"/>
</dbReference>
<dbReference type="PRINTS" id="PR01157">
    <property type="entry name" value="P2YPURNOCPTR"/>
</dbReference>
<dbReference type="SUPFAM" id="SSF81321">
    <property type="entry name" value="Family A G protein-coupled receptor-like"/>
    <property type="match status" value="1"/>
</dbReference>
<dbReference type="PROSITE" id="PS00237">
    <property type="entry name" value="G_PROTEIN_RECEP_F1_1"/>
    <property type="match status" value="1"/>
</dbReference>
<dbReference type="PROSITE" id="PS50262">
    <property type="entry name" value="G_PROTEIN_RECEP_F1_2"/>
    <property type="match status" value="1"/>
</dbReference>
<protein>
    <recommendedName>
        <fullName>P2Y purinoceptor 13</fullName>
        <shortName>P2Y13</shortName>
    </recommendedName>
    <alternativeName>
        <fullName>G-protein coupled receptor 86</fullName>
    </alternativeName>
</protein>
<accession>Q9BE53</accession>
<reference key="1">
    <citation type="submission" date="2001-03" db="EMBL/GenBank/DDBJ databases">
        <title>Isolation of full-length cDNA clones from macaque brain cDNA libraries.</title>
        <authorList>
            <person name="Osada N."/>
            <person name="Hida M."/>
            <person name="Kusuda J."/>
            <person name="Tanuma R."/>
            <person name="Iseki K."/>
            <person name="Hirai M."/>
            <person name="Terao K."/>
            <person name="Suzuki Y."/>
            <person name="Sugano S."/>
            <person name="Hashimoto K."/>
        </authorList>
    </citation>
    <scope>NUCLEOTIDE SEQUENCE [LARGE SCALE MRNA]</scope>
    <source>
        <tissue>Frontal cortex</tissue>
    </source>
</reference>